<sequence length="13" mass="1432">FLPFLAKILTGVL</sequence>
<organism>
    <name type="scientific">Lithobates clamitans</name>
    <name type="common">Green frog</name>
    <name type="synonym">Rana clamitans</name>
    <dbReference type="NCBI Taxonomy" id="145282"/>
    <lineage>
        <taxon>Eukaryota</taxon>
        <taxon>Metazoa</taxon>
        <taxon>Chordata</taxon>
        <taxon>Craniata</taxon>
        <taxon>Vertebrata</taxon>
        <taxon>Euteleostomi</taxon>
        <taxon>Amphibia</taxon>
        <taxon>Batrachia</taxon>
        <taxon>Anura</taxon>
        <taxon>Neobatrachia</taxon>
        <taxon>Ranoidea</taxon>
        <taxon>Ranidae</taxon>
        <taxon>Lithobates</taxon>
    </lineage>
</organism>
<evidence type="ECO:0000250" key="1">
    <source>
        <dbReference type="UniProtKB" id="P82881"/>
    </source>
</evidence>
<evidence type="ECO:0000269" key="2">
    <source>
    </source>
</evidence>
<evidence type="ECO:0000303" key="3">
    <source>
    </source>
</evidence>
<evidence type="ECO:0000305" key="4"/>
<evidence type="ECO:0000305" key="5">
    <source>
    </source>
</evidence>
<reference key="1">
    <citation type="journal article" date="2000" name="Peptides">
        <title>Purification and characterization of antimicrobial peptides from the skin of the North American green frog Rana clamitans.</title>
        <authorList>
            <person name="Halverson T."/>
            <person name="Basir Y.J."/>
            <person name="Knoop F.C."/>
            <person name="Conlon J.M."/>
        </authorList>
    </citation>
    <scope>PROTEIN SEQUENCE</scope>
    <scope>AMIDATION AT LEU-13</scope>
    <scope>MASS SPECTROMETRY</scope>
    <scope>SUBCELLULAR LOCATION</scope>
    <source>
        <tissue>Skin secretion</tissue>
    </source>
</reference>
<proteinExistence type="evidence at protein level"/>
<protein>
    <recommendedName>
        <fullName evidence="3">Temporin-1Ca</fullName>
    </recommendedName>
</protein>
<name>TP1A_LITCL</name>
<comment type="function">
    <text evidence="1">Antibacterial activity against Gram-positive bacterium S.aureus.</text>
</comment>
<comment type="subcellular location">
    <subcellularLocation>
        <location evidence="2">Secreted</location>
    </subcellularLocation>
</comment>
<comment type="tissue specificity">
    <text evidence="5">Expressed by the skin glands.</text>
</comment>
<comment type="mass spectrometry" mass="1430.0" error="0.02" method="Electrospray" evidence="2"/>
<comment type="similarity">
    <text evidence="4">Belongs to the frog skin active peptide (FSAP) family. Temporin subfamily.</text>
</comment>
<accession>P82880</accession>
<feature type="peptide" id="PRO_0000043570" description="Temporin-1Ca" evidence="2">
    <location>
        <begin position="1"/>
        <end position="13"/>
    </location>
</feature>
<feature type="modified residue" description="Leucine amide" evidence="2">
    <location>
        <position position="13"/>
    </location>
</feature>
<keyword id="KW-0027">Amidation</keyword>
<keyword id="KW-0878">Amphibian defense peptide</keyword>
<keyword id="KW-0044">Antibiotic</keyword>
<keyword id="KW-0929">Antimicrobial</keyword>
<keyword id="KW-0903">Direct protein sequencing</keyword>
<keyword id="KW-0964">Secreted</keyword>
<dbReference type="GO" id="GO:0005576">
    <property type="term" value="C:extracellular region"/>
    <property type="evidence" value="ECO:0007669"/>
    <property type="project" value="UniProtKB-SubCell"/>
</dbReference>
<dbReference type="GO" id="GO:0042742">
    <property type="term" value="P:defense response to bacterium"/>
    <property type="evidence" value="ECO:0007669"/>
    <property type="project" value="UniProtKB-KW"/>
</dbReference>